<proteinExistence type="inferred from homology"/>
<dbReference type="EC" id="2.3.1.47" evidence="1"/>
<dbReference type="EMBL" id="CP000712">
    <property type="protein sequence ID" value="ABQ76562.1"/>
    <property type="molecule type" value="Genomic_DNA"/>
</dbReference>
<dbReference type="SMR" id="A5VXF2"/>
<dbReference type="KEGG" id="ppf:Pput_0389"/>
<dbReference type="eggNOG" id="COG0156">
    <property type="taxonomic scope" value="Bacteria"/>
</dbReference>
<dbReference type="HOGENOM" id="CLU_015846_11_2_6"/>
<dbReference type="UniPathway" id="UPA00078"/>
<dbReference type="GO" id="GO:0008710">
    <property type="term" value="F:8-amino-7-oxononanoate synthase activity"/>
    <property type="evidence" value="ECO:0007669"/>
    <property type="project" value="UniProtKB-UniRule"/>
</dbReference>
<dbReference type="GO" id="GO:0030170">
    <property type="term" value="F:pyridoxal phosphate binding"/>
    <property type="evidence" value="ECO:0007669"/>
    <property type="project" value="UniProtKB-UniRule"/>
</dbReference>
<dbReference type="GO" id="GO:0009102">
    <property type="term" value="P:biotin biosynthetic process"/>
    <property type="evidence" value="ECO:0007669"/>
    <property type="project" value="UniProtKB-UniRule"/>
</dbReference>
<dbReference type="CDD" id="cd06454">
    <property type="entry name" value="KBL_like"/>
    <property type="match status" value="1"/>
</dbReference>
<dbReference type="Gene3D" id="3.90.1150.10">
    <property type="entry name" value="Aspartate Aminotransferase, domain 1"/>
    <property type="match status" value="1"/>
</dbReference>
<dbReference type="Gene3D" id="3.40.640.10">
    <property type="entry name" value="Type I PLP-dependent aspartate aminotransferase-like (Major domain)"/>
    <property type="match status" value="1"/>
</dbReference>
<dbReference type="HAMAP" id="MF_01693">
    <property type="entry name" value="BioF_aminotrans_2"/>
    <property type="match status" value="1"/>
</dbReference>
<dbReference type="InterPro" id="IPR004839">
    <property type="entry name" value="Aminotransferase_I/II_large"/>
</dbReference>
<dbReference type="InterPro" id="IPR050087">
    <property type="entry name" value="AON_synthase_class-II"/>
</dbReference>
<dbReference type="InterPro" id="IPR004723">
    <property type="entry name" value="AONS_Archaea/Proteobacteria"/>
</dbReference>
<dbReference type="InterPro" id="IPR022834">
    <property type="entry name" value="AONS_Proteobacteria"/>
</dbReference>
<dbReference type="InterPro" id="IPR015424">
    <property type="entry name" value="PyrdxlP-dep_Trfase"/>
</dbReference>
<dbReference type="InterPro" id="IPR015421">
    <property type="entry name" value="PyrdxlP-dep_Trfase_major"/>
</dbReference>
<dbReference type="InterPro" id="IPR015422">
    <property type="entry name" value="PyrdxlP-dep_Trfase_small"/>
</dbReference>
<dbReference type="NCBIfam" id="TIGR00858">
    <property type="entry name" value="bioF"/>
    <property type="match status" value="1"/>
</dbReference>
<dbReference type="PANTHER" id="PTHR13693:SF100">
    <property type="entry name" value="8-AMINO-7-OXONONANOATE SYNTHASE"/>
    <property type="match status" value="1"/>
</dbReference>
<dbReference type="PANTHER" id="PTHR13693">
    <property type="entry name" value="CLASS II AMINOTRANSFERASE/8-AMINO-7-OXONONANOATE SYNTHASE"/>
    <property type="match status" value="1"/>
</dbReference>
<dbReference type="Pfam" id="PF00155">
    <property type="entry name" value="Aminotran_1_2"/>
    <property type="match status" value="1"/>
</dbReference>
<dbReference type="SUPFAM" id="SSF53383">
    <property type="entry name" value="PLP-dependent transferases"/>
    <property type="match status" value="1"/>
</dbReference>
<evidence type="ECO:0000255" key="1">
    <source>
        <dbReference type="HAMAP-Rule" id="MF_01693"/>
    </source>
</evidence>
<accession>A5VXF2</accession>
<feature type="chain" id="PRO_0000381078" description="8-amino-7-oxononanoate synthase">
    <location>
        <begin position="1"/>
        <end position="390"/>
    </location>
</feature>
<feature type="binding site" evidence="1">
    <location>
        <position position="19"/>
    </location>
    <ligand>
        <name>substrate</name>
    </ligand>
</feature>
<feature type="binding site" evidence="1">
    <location>
        <begin position="106"/>
        <end position="107"/>
    </location>
    <ligand>
        <name>pyridoxal 5'-phosphate</name>
        <dbReference type="ChEBI" id="CHEBI:597326"/>
    </ligand>
</feature>
<feature type="binding site" evidence="1">
    <location>
        <position position="131"/>
    </location>
    <ligand>
        <name>substrate</name>
    </ligand>
</feature>
<feature type="binding site" evidence="1">
    <location>
        <position position="176"/>
    </location>
    <ligand>
        <name>pyridoxal 5'-phosphate</name>
        <dbReference type="ChEBI" id="CHEBI:597326"/>
    </ligand>
</feature>
<feature type="binding site" evidence="1">
    <location>
        <position position="204"/>
    </location>
    <ligand>
        <name>pyridoxal 5'-phosphate</name>
        <dbReference type="ChEBI" id="CHEBI:597326"/>
    </ligand>
</feature>
<feature type="binding site" evidence="1">
    <location>
        <position position="233"/>
    </location>
    <ligand>
        <name>pyridoxal 5'-phosphate</name>
        <dbReference type="ChEBI" id="CHEBI:597326"/>
    </ligand>
</feature>
<feature type="binding site" evidence="1">
    <location>
        <position position="350"/>
    </location>
    <ligand>
        <name>substrate</name>
    </ligand>
</feature>
<feature type="modified residue" description="N6-(pyridoxal phosphate)lysine" evidence="1">
    <location>
        <position position="236"/>
    </location>
</feature>
<protein>
    <recommendedName>
        <fullName evidence="1">8-amino-7-oxononanoate synthase</fullName>
        <shortName evidence="1">AONS</shortName>
        <ecNumber evidence="1">2.3.1.47</ecNumber>
    </recommendedName>
    <alternativeName>
        <fullName evidence="1">7-keto-8-amino-pelargonic acid synthase</fullName>
        <shortName evidence="1">7-KAP synthase</shortName>
        <shortName evidence="1">KAPA synthase</shortName>
    </alternativeName>
    <alternativeName>
        <fullName evidence="1">8-amino-7-ketopelargonate synthase</fullName>
    </alternativeName>
</protein>
<organism>
    <name type="scientific">Pseudomonas putida (strain ATCC 700007 / DSM 6899 / JCM 31910 / BCRC 17059 / LMG 24140 / F1)</name>
    <dbReference type="NCBI Taxonomy" id="351746"/>
    <lineage>
        <taxon>Bacteria</taxon>
        <taxon>Pseudomonadati</taxon>
        <taxon>Pseudomonadota</taxon>
        <taxon>Gammaproteobacteria</taxon>
        <taxon>Pseudomonadales</taxon>
        <taxon>Pseudomonadaceae</taxon>
        <taxon>Pseudomonas</taxon>
    </lineage>
</organism>
<keyword id="KW-0093">Biotin biosynthesis</keyword>
<keyword id="KW-0663">Pyridoxal phosphate</keyword>
<keyword id="KW-0808">Transferase</keyword>
<comment type="function">
    <text evidence="1">Catalyzes the decarboxylative condensation of pimeloyl-[acyl-carrier protein] and L-alanine to produce 8-amino-7-oxononanoate (AON), [acyl-carrier protein], and carbon dioxide.</text>
</comment>
<comment type="catalytic activity">
    <reaction evidence="1">
        <text>6-carboxyhexanoyl-[ACP] + L-alanine + H(+) = (8S)-8-amino-7-oxononanoate + holo-[ACP] + CO2</text>
        <dbReference type="Rhea" id="RHEA:42288"/>
        <dbReference type="Rhea" id="RHEA-COMP:9685"/>
        <dbReference type="Rhea" id="RHEA-COMP:9955"/>
        <dbReference type="ChEBI" id="CHEBI:15378"/>
        <dbReference type="ChEBI" id="CHEBI:16526"/>
        <dbReference type="ChEBI" id="CHEBI:57972"/>
        <dbReference type="ChEBI" id="CHEBI:64479"/>
        <dbReference type="ChEBI" id="CHEBI:78846"/>
        <dbReference type="ChEBI" id="CHEBI:149468"/>
        <dbReference type="EC" id="2.3.1.47"/>
    </reaction>
</comment>
<comment type="cofactor">
    <cofactor evidence="1">
        <name>pyridoxal 5'-phosphate</name>
        <dbReference type="ChEBI" id="CHEBI:597326"/>
    </cofactor>
</comment>
<comment type="pathway">
    <text evidence="1">Cofactor biosynthesis; biotin biosynthesis.</text>
</comment>
<comment type="subunit">
    <text evidence="1">Homodimer.</text>
</comment>
<comment type="similarity">
    <text evidence="1">Belongs to the class-II pyridoxal-phosphate-dependent aminotransferase family. BioF subfamily.</text>
</comment>
<name>BIOF_PSEP1</name>
<gene>
    <name evidence="1" type="primary">bioF</name>
    <name type="ordered locus">Pput_0389</name>
</gene>
<sequence>MAFDLAARLAERRAADLYRQRPLLESPQGPEVVVDGQRLLAFCSNDYLGLANHPEVITAWQAGAERWGVGGGASHLVVGHSTPHHQVEEALAELTGRPRALLFSTGYMANLGAITALVGQGDTVLQDRLNHASLLDGGLLSGARFNRYLHNDPASLASRLDKAVGNTLVVTDGVFSMDGDLADLPALADVARARGAWLMVDDAHGLGTLGTQGGGIVEHFGLGVDDVPVLIGTLGKACGTAGAFVAGSEALIEALVQFARPYIYTTSQPPALACATLKSLELLRRETWRREHLAALIRQFREGAQQMGLQLMDSPTPIQPIVIGDSAQALRLSRLLRERGLLVTAIRPPTVPAGSARLRVTLSAAHSEAQVQLLLNALAECYPQLENADA</sequence>
<reference key="1">
    <citation type="submission" date="2007-05" db="EMBL/GenBank/DDBJ databases">
        <title>Complete sequence of Pseudomonas putida F1.</title>
        <authorList>
            <consortium name="US DOE Joint Genome Institute"/>
            <person name="Copeland A."/>
            <person name="Lucas S."/>
            <person name="Lapidus A."/>
            <person name="Barry K."/>
            <person name="Detter J.C."/>
            <person name="Glavina del Rio T."/>
            <person name="Hammon N."/>
            <person name="Israni S."/>
            <person name="Dalin E."/>
            <person name="Tice H."/>
            <person name="Pitluck S."/>
            <person name="Chain P."/>
            <person name="Malfatti S."/>
            <person name="Shin M."/>
            <person name="Vergez L."/>
            <person name="Schmutz J."/>
            <person name="Larimer F."/>
            <person name="Land M."/>
            <person name="Hauser L."/>
            <person name="Kyrpides N."/>
            <person name="Lykidis A."/>
            <person name="Parales R."/>
            <person name="Richardson P."/>
        </authorList>
    </citation>
    <scope>NUCLEOTIDE SEQUENCE [LARGE SCALE GENOMIC DNA]</scope>
    <source>
        <strain>ATCC 700007 / DSM 6899 / JCM 31910 / BCRC 17059 / LMG 24140 / F1</strain>
    </source>
</reference>